<reference key="1">
    <citation type="submission" date="2008-04" db="EMBL/GenBank/DDBJ databases">
        <title>Complete sequence of chromosome of Methylobacterium populi BJ001.</title>
        <authorList>
            <consortium name="US DOE Joint Genome Institute"/>
            <person name="Copeland A."/>
            <person name="Lucas S."/>
            <person name="Lapidus A."/>
            <person name="Glavina del Rio T."/>
            <person name="Dalin E."/>
            <person name="Tice H."/>
            <person name="Bruce D."/>
            <person name="Goodwin L."/>
            <person name="Pitluck S."/>
            <person name="Chertkov O."/>
            <person name="Brettin T."/>
            <person name="Detter J.C."/>
            <person name="Han C."/>
            <person name="Kuske C.R."/>
            <person name="Schmutz J."/>
            <person name="Larimer F."/>
            <person name="Land M."/>
            <person name="Hauser L."/>
            <person name="Kyrpides N."/>
            <person name="Mikhailova N."/>
            <person name="Marx C."/>
            <person name="Richardson P."/>
        </authorList>
    </citation>
    <scope>NUCLEOTIDE SEQUENCE [LARGE SCALE GENOMIC DNA]</scope>
    <source>
        <strain>ATCC BAA-705 / NCIMB 13946 / BJ001</strain>
    </source>
</reference>
<keyword id="KW-0012">Acyltransferase</keyword>
<keyword id="KW-0093">Biotin biosynthesis</keyword>
<keyword id="KW-0663">Pyridoxal phosphate</keyword>
<keyword id="KW-0808">Transferase</keyword>
<comment type="function">
    <text evidence="1">Catalyzes the decarboxylative condensation of pimeloyl-[acyl-carrier protein] and L-alanine to produce 8-amino-7-oxononanoate (AON), [acyl-carrier protein], and carbon dioxide.</text>
</comment>
<comment type="catalytic activity">
    <reaction>
        <text>6-carboxyhexanoyl-[ACP] + L-alanine + H(+) = (8S)-8-amino-7-oxononanoate + holo-[ACP] + CO2</text>
        <dbReference type="Rhea" id="RHEA:42288"/>
        <dbReference type="Rhea" id="RHEA-COMP:9685"/>
        <dbReference type="Rhea" id="RHEA-COMP:9955"/>
        <dbReference type="ChEBI" id="CHEBI:15378"/>
        <dbReference type="ChEBI" id="CHEBI:16526"/>
        <dbReference type="ChEBI" id="CHEBI:57972"/>
        <dbReference type="ChEBI" id="CHEBI:64479"/>
        <dbReference type="ChEBI" id="CHEBI:78846"/>
        <dbReference type="ChEBI" id="CHEBI:149468"/>
        <dbReference type="EC" id="2.3.1.47"/>
    </reaction>
</comment>
<comment type="cofactor">
    <cofactor evidence="1">
        <name>pyridoxal 5'-phosphate</name>
        <dbReference type="ChEBI" id="CHEBI:597326"/>
    </cofactor>
</comment>
<comment type="pathway">
    <text>Cofactor biosynthesis; biotin biosynthesis.</text>
</comment>
<comment type="subunit">
    <text evidence="1">Homodimer.</text>
</comment>
<comment type="similarity">
    <text evidence="2">Belongs to the class-II pyridoxal-phosphate-dependent aminotransferase family. BioF subfamily.</text>
</comment>
<accession>B1Z7Y8</accession>
<organism>
    <name type="scientific">Methylorubrum populi (strain ATCC BAA-705 / NCIMB 13946 / BJ001)</name>
    <name type="common">Methylobacterium populi</name>
    <dbReference type="NCBI Taxonomy" id="441620"/>
    <lineage>
        <taxon>Bacteria</taxon>
        <taxon>Pseudomonadati</taxon>
        <taxon>Pseudomonadota</taxon>
        <taxon>Alphaproteobacteria</taxon>
        <taxon>Hyphomicrobiales</taxon>
        <taxon>Methylobacteriaceae</taxon>
        <taxon>Methylorubrum</taxon>
    </lineage>
</organism>
<gene>
    <name type="ordered locus">Mpop_0781</name>
</gene>
<evidence type="ECO:0000250" key="1"/>
<evidence type="ECO:0000305" key="2"/>
<protein>
    <recommendedName>
        <fullName>8-amino-7-oxononanoate synthase</fullName>
        <shortName>AONS</shortName>
        <ecNumber>2.3.1.47</ecNumber>
    </recommendedName>
    <alternativeName>
        <fullName>7-keto-8-amino-pelargonic acid synthase</fullName>
        <shortName>7-KAP synthase</shortName>
        <shortName>KAPA synthase</shortName>
    </alternativeName>
    <alternativeName>
        <fullName>8-amino-7-ketopelargonate synthase</fullName>
    </alternativeName>
    <alternativeName>
        <fullName>Alpha-oxoamine synthase</fullName>
    </alternativeName>
</protein>
<proteinExistence type="inferred from homology"/>
<dbReference type="EC" id="2.3.1.47"/>
<dbReference type="EMBL" id="CP001029">
    <property type="protein sequence ID" value="ACB78959.1"/>
    <property type="molecule type" value="Genomic_DNA"/>
</dbReference>
<dbReference type="RefSeq" id="WP_012452715.1">
    <property type="nucleotide sequence ID" value="NC_010725.1"/>
</dbReference>
<dbReference type="SMR" id="B1Z7Y8"/>
<dbReference type="STRING" id="441620.Mpop_0781"/>
<dbReference type="KEGG" id="mpo:Mpop_0781"/>
<dbReference type="eggNOG" id="COG0156">
    <property type="taxonomic scope" value="Bacteria"/>
</dbReference>
<dbReference type="HOGENOM" id="CLU_015846_11_0_5"/>
<dbReference type="OrthoDB" id="9807157at2"/>
<dbReference type="UniPathway" id="UPA00078"/>
<dbReference type="Proteomes" id="UP000007136">
    <property type="component" value="Chromosome"/>
</dbReference>
<dbReference type="GO" id="GO:0008710">
    <property type="term" value="F:8-amino-7-oxononanoate synthase activity"/>
    <property type="evidence" value="ECO:0007669"/>
    <property type="project" value="UniProtKB-EC"/>
</dbReference>
<dbReference type="GO" id="GO:0030170">
    <property type="term" value="F:pyridoxal phosphate binding"/>
    <property type="evidence" value="ECO:0007669"/>
    <property type="project" value="InterPro"/>
</dbReference>
<dbReference type="GO" id="GO:0009102">
    <property type="term" value="P:biotin biosynthetic process"/>
    <property type="evidence" value="ECO:0007669"/>
    <property type="project" value="UniProtKB-UniPathway"/>
</dbReference>
<dbReference type="Gene3D" id="3.90.1150.10">
    <property type="entry name" value="Aspartate Aminotransferase, domain 1"/>
    <property type="match status" value="1"/>
</dbReference>
<dbReference type="Gene3D" id="3.40.640.10">
    <property type="entry name" value="Type I PLP-dependent aspartate aminotransferase-like (Major domain)"/>
    <property type="match status" value="1"/>
</dbReference>
<dbReference type="InterPro" id="IPR004839">
    <property type="entry name" value="Aminotransferase_I/II_large"/>
</dbReference>
<dbReference type="InterPro" id="IPR050087">
    <property type="entry name" value="AON_synthase_class-II"/>
</dbReference>
<dbReference type="InterPro" id="IPR015424">
    <property type="entry name" value="PyrdxlP-dep_Trfase"/>
</dbReference>
<dbReference type="InterPro" id="IPR015421">
    <property type="entry name" value="PyrdxlP-dep_Trfase_major"/>
</dbReference>
<dbReference type="InterPro" id="IPR015422">
    <property type="entry name" value="PyrdxlP-dep_Trfase_small"/>
</dbReference>
<dbReference type="PANTHER" id="PTHR13693:SF100">
    <property type="entry name" value="8-AMINO-7-OXONONANOATE SYNTHASE"/>
    <property type="match status" value="1"/>
</dbReference>
<dbReference type="PANTHER" id="PTHR13693">
    <property type="entry name" value="CLASS II AMINOTRANSFERASE/8-AMINO-7-OXONONANOATE SYNTHASE"/>
    <property type="match status" value="1"/>
</dbReference>
<dbReference type="Pfam" id="PF00155">
    <property type="entry name" value="Aminotran_1_2"/>
    <property type="match status" value="1"/>
</dbReference>
<dbReference type="SUPFAM" id="SSF53383">
    <property type="entry name" value="PLP-dependent transferases"/>
    <property type="match status" value="1"/>
</dbReference>
<feature type="chain" id="PRO_0000381026" description="8-amino-7-oxononanoate synthase">
    <location>
        <begin position="1"/>
        <end position="387"/>
    </location>
</feature>
<feature type="binding site" evidence="1">
    <location>
        <position position="31"/>
    </location>
    <ligand>
        <name>substrate</name>
    </ligand>
</feature>
<feature type="binding site" evidence="1">
    <location>
        <position position="38"/>
    </location>
    <ligand>
        <name>substrate</name>
    </ligand>
</feature>
<feature type="binding site" evidence="1">
    <location>
        <begin position="118"/>
        <end position="119"/>
    </location>
    <ligand>
        <name>pyridoxal 5'-phosphate</name>
        <dbReference type="ChEBI" id="CHEBI:597326"/>
    </ligand>
</feature>
<feature type="binding site" evidence="1">
    <location>
        <position position="143"/>
    </location>
    <ligand>
        <name>substrate</name>
    </ligand>
</feature>
<feature type="binding site" evidence="1">
    <location>
        <position position="191"/>
    </location>
    <ligand>
        <name>pyridoxal 5'-phosphate</name>
        <dbReference type="ChEBI" id="CHEBI:597326"/>
    </ligand>
</feature>
<feature type="binding site" evidence="1">
    <location>
        <begin position="216"/>
        <end position="219"/>
    </location>
    <ligand>
        <name>pyridoxal 5'-phosphate</name>
        <dbReference type="ChEBI" id="CHEBI:597326"/>
    </ligand>
</feature>
<feature type="binding site" evidence="1">
    <location>
        <begin position="236"/>
        <end position="239"/>
    </location>
    <ligand>
        <name>pyridoxal 5'-phosphate</name>
        <dbReference type="ChEBI" id="CHEBI:597326"/>
    </ligand>
</feature>
<feature type="binding site" evidence="1">
    <location>
        <position position="348"/>
    </location>
    <ligand>
        <name>substrate</name>
    </ligand>
</feature>
<feature type="modified residue" description="N6-(pyridoxal phosphate)lysine" evidence="1">
    <location>
        <position position="239"/>
    </location>
</feature>
<sequence length="387" mass="39969">MAPNLSPNPSNSLDAFAAEKLAGLEAAALRRRLAVTARGPEAAAERGGRRLVSFSCNDYLGLAHDPRVIAAASDALRRYGAGAGASRLVTGNSPPLAALEERLARHKGKEAALVFGSGYLANLGIAPALVGQGDLILIDDLGHSCLFAGARMSGALTLRFTHNDVAQLRALLAEQRGAARRALILTERVFSMDGDRAPLAEILALAGAYDAWTLVDDAHGLGVVEPGQRAPLEMGTLSKTLGSYGGYLCASRAVIDLLTSRARSLVYTTGLPPASAAAALKALEIVEAEPEHAARPLMLARRFTARLGLPEATSPIVPVLVGAAESALALSAALEARGFLVVAIRPPTVAPGTARLRVAFSAAHDAAQVDALAEALAELAPDSLRAA</sequence>
<name>BIOF_METPB</name>